<gene>
    <name type="primary">ADAM9</name>
    <name type="synonym">KIAA0021</name>
    <name type="synonym">MCMP</name>
    <name type="synonym">MDC9</name>
    <name type="synonym">MLTNG</name>
</gene>
<dbReference type="EC" id="3.4.24.-" evidence="2"/>
<dbReference type="EMBL" id="U41766">
    <property type="protein sequence ID" value="AAC50403.1"/>
    <property type="molecule type" value="mRNA"/>
</dbReference>
<dbReference type="EMBL" id="AF495383">
    <property type="protein sequence ID" value="AAM49575.1"/>
    <property type="molecule type" value="mRNA"/>
</dbReference>
<dbReference type="EMBL" id="D14665">
    <property type="protein sequence ID" value="BAA03499.2"/>
    <property type="molecule type" value="mRNA"/>
</dbReference>
<dbReference type="EMBL" id="CH471080">
    <property type="protein sequence ID" value="EAW63284.1"/>
    <property type="molecule type" value="Genomic_DNA"/>
</dbReference>
<dbReference type="EMBL" id="BC143923">
    <property type="protein sequence ID" value="AAI43924.1"/>
    <property type="molecule type" value="mRNA"/>
</dbReference>
<dbReference type="CCDS" id="CCDS6112.1">
    <molecule id="Q13443-1"/>
</dbReference>
<dbReference type="PIR" id="JC7850">
    <property type="entry name" value="JC7850"/>
</dbReference>
<dbReference type="PIR" id="S71949">
    <property type="entry name" value="S71949"/>
</dbReference>
<dbReference type="RefSeq" id="NP_003807.1">
    <molecule id="Q13443-1"/>
    <property type="nucleotide sequence ID" value="NM_003816.3"/>
</dbReference>
<dbReference type="SMR" id="Q13443"/>
<dbReference type="BioGRID" id="114290">
    <property type="interactions" value="150"/>
</dbReference>
<dbReference type="CORUM" id="Q13443"/>
<dbReference type="FunCoup" id="Q13443">
    <property type="interactions" value="984"/>
</dbReference>
<dbReference type="IntAct" id="Q13443">
    <property type="interactions" value="90"/>
</dbReference>
<dbReference type="MINT" id="Q13443"/>
<dbReference type="STRING" id="9606.ENSP00000419446"/>
<dbReference type="BindingDB" id="Q13443"/>
<dbReference type="ChEMBL" id="CHEMBL5982"/>
<dbReference type="DrugBank" id="DB05033">
    <property type="generic name" value="INCB7839"/>
</dbReference>
<dbReference type="DrugCentral" id="Q13443"/>
<dbReference type="GuidetoPHARMACOLOGY" id="1657"/>
<dbReference type="MEROPS" id="M12.209"/>
<dbReference type="GlyConnect" id="1181">
    <property type="glycosylation" value="6 N-Linked glycans (1 site)"/>
</dbReference>
<dbReference type="GlyCosmos" id="Q13443">
    <property type="glycosylation" value="6 sites, 6 glycans"/>
</dbReference>
<dbReference type="GlyGen" id="Q13443">
    <property type="glycosylation" value="16 sites, 24 N-linked glycans (5 sites), 2 O-linked glycans (10 sites)"/>
</dbReference>
<dbReference type="iPTMnet" id="Q13443"/>
<dbReference type="PhosphoSitePlus" id="Q13443"/>
<dbReference type="SwissPalm" id="Q13443"/>
<dbReference type="BioMuta" id="ADAM9"/>
<dbReference type="DMDM" id="24211441"/>
<dbReference type="jPOST" id="Q13443"/>
<dbReference type="MassIVE" id="Q13443"/>
<dbReference type="PaxDb" id="9606-ENSP00000419446"/>
<dbReference type="PeptideAtlas" id="Q13443"/>
<dbReference type="ProteomicsDB" id="59440">
    <molecule id="Q13443-1"/>
</dbReference>
<dbReference type="ProteomicsDB" id="59441">
    <molecule id="Q13443-2"/>
</dbReference>
<dbReference type="Pumba" id="Q13443"/>
<dbReference type="ABCD" id="Q13443">
    <property type="antibodies" value="25 sequenced antibodies"/>
</dbReference>
<dbReference type="Antibodypedia" id="1281">
    <property type="antibodies" value="367 antibodies from 39 providers"/>
</dbReference>
<dbReference type="DNASU" id="8754"/>
<dbReference type="Ensembl" id="ENST00000379917.7">
    <molecule id="Q13443-2"/>
    <property type="protein sequence ID" value="ENSP00000369249.3"/>
    <property type="gene ID" value="ENSG00000168615.13"/>
</dbReference>
<dbReference type="Ensembl" id="ENST00000487273.7">
    <molecule id="Q13443-1"/>
    <property type="protein sequence ID" value="ENSP00000419446.2"/>
    <property type="gene ID" value="ENSG00000168615.13"/>
</dbReference>
<dbReference type="GeneID" id="8754"/>
<dbReference type="KEGG" id="hsa:8754"/>
<dbReference type="MANE-Select" id="ENST00000487273.7">
    <property type="protein sequence ID" value="ENSP00000419446.2"/>
    <property type="RefSeq nucleotide sequence ID" value="NM_003816.3"/>
    <property type="RefSeq protein sequence ID" value="NP_003807.1"/>
</dbReference>
<dbReference type="UCSC" id="uc003xmr.4">
    <molecule id="Q13443-1"/>
    <property type="organism name" value="human"/>
</dbReference>
<dbReference type="AGR" id="HGNC:216"/>
<dbReference type="CTD" id="8754"/>
<dbReference type="DisGeNET" id="8754"/>
<dbReference type="GeneCards" id="ADAM9"/>
<dbReference type="HGNC" id="HGNC:216">
    <property type="gene designation" value="ADAM9"/>
</dbReference>
<dbReference type="HPA" id="ENSG00000168615">
    <property type="expression patterns" value="Low tissue specificity"/>
</dbReference>
<dbReference type="MalaCards" id="ADAM9"/>
<dbReference type="MIM" id="602713">
    <property type="type" value="gene"/>
</dbReference>
<dbReference type="MIM" id="612775">
    <property type="type" value="phenotype"/>
</dbReference>
<dbReference type="neXtProt" id="NX_Q13443"/>
<dbReference type="OpenTargets" id="ENSG00000168615"/>
<dbReference type="Orphanet" id="1872">
    <property type="disease" value="Cone rod dystrophy"/>
</dbReference>
<dbReference type="PharmGKB" id="PA24534"/>
<dbReference type="VEuPathDB" id="HostDB:ENSG00000168615"/>
<dbReference type="eggNOG" id="KOG3607">
    <property type="taxonomic scope" value="Eukaryota"/>
</dbReference>
<dbReference type="GeneTree" id="ENSGT00940000156239"/>
<dbReference type="HOGENOM" id="CLU_012714_4_1_1"/>
<dbReference type="InParanoid" id="Q13443"/>
<dbReference type="OrthoDB" id="5951731at2759"/>
<dbReference type="PAN-GO" id="Q13443">
    <property type="GO annotations" value="6 GO annotations based on evolutionary models"/>
</dbReference>
<dbReference type="PhylomeDB" id="Q13443"/>
<dbReference type="TreeFam" id="TF314733"/>
<dbReference type="BRENDA" id="3.4.24.B9">
    <property type="organism ID" value="2681"/>
</dbReference>
<dbReference type="PathwayCommons" id="Q13443"/>
<dbReference type="Reactome" id="R-HSA-1442490">
    <property type="pathway name" value="Collagen degradation"/>
</dbReference>
<dbReference type="SignaLink" id="Q13443"/>
<dbReference type="SIGNOR" id="Q13443"/>
<dbReference type="BioGRID-ORCS" id="8754">
    <property type="hits" value="10 hits in 1169 CRISPR screens"/>
</dbReference>
<dbReference type="ChiTaRS" id="ADAM9">
    <property type="organism name" value="human"/>
</dbReference>
<dbReference type="GeneWiki" id="ADAM9"/>
<dbReference type="GenomeRNAi" id="8754"/>
<dbReference type="Pharos" id="Q13443">
    <property type="development level" value="Tchem"/>
</dbReference>
<dbReference type="PRO" id="PR:Q13443"/>
<dbReference type="Proteomes" id="UP000005640">
    <property type="component" value="Chromosome 8"/>
</dbReference>
<dbReference type="RNAct" id="Q13443">
    <property type="molecule type" value="protein"/>
</dbReference>
<dbReference type="Bgee" id="ENSG00000168615">
    <property type="expression patterns" value="Expressed in stromal cell of endometrium and 143 other cell types or tissues"/>
</dbReference>
<dbReference type="ExpressionAtlas" id="Q13443">
    <property type="expression patterns" value="baseline and differential"/>
</dbReference>
<dbReference type="GO" id="GO:0009986">
    <property type="term" value="C:cell surface"/>
    <property type="evidence" value="ECO:0000250"/>
    <property type="project" value="BHF-UCL"/>
</dbReference>
<dbReference type="GO" id="GO:0009897">
    <property type="term" value="C:external side of plasma membrane"/>
    <property type="evidence" value="ECO:0000250"/>
    <property type="project" value="BHF-UCL"/>
</dbReference>
<dbReference type="GO" id="GO:0070062">
    <property type="term" value="C:extracellular exosome"/>
    <property type="evidence" value="ECO:0007005"/>
    <property type="project" value="UniProtKB"/>
</dbReference>
<dbReference type="GO" id="GO:0005615">
    <property type="term" value="C:extracellular space"/>
    <property type="evidence" value="ECO:0000314"/>
    <property type="project" value="BHF-UCL"/>
</dbReference>
<dbReference type="GO" id="GO:0005925">
    <property type="term" value="C:focal adhesion"/>
    <property type="evidence" value="ECO:0007005"/>
    <property type="project" value="UniProtKB"/>
</dbReference>
<dbReference type="GO" id="GO:0005886">
    <property type="term" value="C:plasma membrane"/>
    <property type="evidence" value="ECO:0000318"/>
    <property type="project" value="GO_Central"/>
</dbReference>
<dbReference type="GO" id="GO:0005518">
    <property type="term" value="F:collagen binding"/>
    <property type="evidence" value="ECO:0000315"/>
    <property type="project" value="BHF-UCL"/>
</dbReference>
<dbReference type="GO" id="GO:0005178">
    <property type="term" value="F:integrin binding"/>
    <property type="evidence" value="ECO:0000314"/>
    <property type="project" value="BHF-UCL"/>
</dbReference>
<dbReference type="GO" id="GO:0043236">
    <property type="term" value="F:laminin binding"/>
    <property type="evidence" value="ECO:0000315"/>
    <property type="project" value="BHF-UCL"/>
</dbReference>
<dbReference type="GO" id="GO:0046872">
    <property type="term" value="F:metal ion binding"/>
    <property type="evidence" value="ECO:0007669"/>
    <property type="project" value="UniProtKB-KW"/>
</dbReference>
<dbReference type="GO" id="GO:0004222">
    <property type="term" value="F:metalloendopeptidase activity"/>
    <property type="evidence" value="ECO:0000314"/>
    <property type="project" value="ARUK-UCL"/>
</dbReference>
<dbReference type="GO" id="GO:1902945">
    <property type="term" value="F:metalloendopeptidase activity involved in amyloid precursor protein catabolic process"/>
    <property type="evidence" value="ECO:0000314"/>
    <property type="project" value="ARUK-UCL"/>
</dbReference>
<dbReference type="GO" id="GO:0008237">
    <property type="term" value="F:metallopeptidase activity"/>
    <property type="evidence" value="ECO:0000315"/>
    <property type="project" value="BHF-UCL"/>
</dbReference>
<dbReference type="GO" id="GO:0005080">
    <property type="term" value="F:protein kinase C binding"/>
    <property type="evidence" value="ECO:0000250"/>
    <property type="project" value="BHF-UCL"/>
</dbReference>
<dbReference type="GO" id="GO:0017124">
    <property type="term" value="F:SH3 domain binding"/>
    <property type="evidence" value="ECO:0000353"/>
    <property type="project" value="BHF-UCL"/>
</dbReference>
<dbReference type="GO" id="GO:0042987">
    <property type="term" value="P:amyloid precursor protein catabolic process"/>
    <property type="evidence" value="ECO:0000314"/>
    <property type="project" value="ARUK-UCL"/>
</dbReference>
<dbReference type="GO" id="GO:0007155">
    <property type="term" value="P:cell adhesion"/>
    <property type="evidence" value="ECO:0000315"/>
    <property type="project" value="BHF-UCL"/>
</dbReference>
<dbReference type="GO" id="GO:0033627">
    <property type="term" value="P:cell adhesion mediated by integrin"/>
    <property type="evidence" value="ECO:0000315"/>
    <property type="project" value="BHF-UCL"/>
</dbReference>
<dbReference type="GO" id="GO:0016477">
    <property type="term" value="P:cell migration"/>
    <property type="evidence" value="ECO:0000250"/>
    <property type="project" value="UniProtKB"/>
</dbReference>
<dbReference type="GO" id="GO:0033631">
    <property type="term" value="P:cell-cell adhesion mediated by integrin"/>
    <property type="evidence" value="ECO:0000270"/>
    <property type="project" value="BHF-UCL"/>
</dbReference>
<dbReference type="GO" id="GO:0007160">
    <property type="term" value="P:cell-matrix adhesion"/>
    <property type="evidence" value="ECO:0000315"/>
    <property type="project" value="BHF-UCL"/>
</dbReference>
<dbReference type="GO" id="GO:0071222">
    <property type="term" value="P:cellular response to lipopolysaccharide"/>
    <property type="evidence" value="ECO:0000315"/>
    <property type="project" value="BHF-UCL"/>
</dbReference>
<dbReference type="GO" id="GO:0007229">
    <property type="term" value="P:integrin-mediated signaling pathway"/>
    <property type="evidence" value="ECO:0000305"/>
    <property type="project" value="BHF-UCL"/>
</dbReference>
<dbReference type="GO" id="GO:0030216">
    <property type="term" value="P:keratinocyte differentiation"/>
    <property type="evidence" value="ECO:0000270"/>
    <property type="project" value="BHF-UCL"/>
</dbReference>
<dbReference type="GO" id="GO:0006509">
    <property type="term" value="P:membrane protein ectodomain proteolysis"/>
    <property type="evidence" value="ECO:0000314"/>
    <property type="project" value="BHF-UCL"/>
</dbReference>
<dbReference type="GO" id="GO:0031293">
    <property type="term" value="P:membrane protein intracellular domain proteolysis"/>
    <property type="evidence" value="ECO:0000315"/>
    <property type="project" value="ARUK-UCL"/>
</dbReference>
<dbReference type="GO" id="GO:0042117">
    <property type="term" value="P:monocyte activation"/>
    <property type="evidence" value="ECO:0000315"/>
    <property type="project" value="BHF-UCL"/>
</dbReference>
<dbReference type="GO" id="GO:0033630">
    <property type="term" value="P:positive regulation of cell adhesion mediated by integrin"/>
    <property type="evidence" value="ECO:0000315"/>
    <property type="project" value="BHF-UCL"/>
</dbReference>
<dbReference type="GO" id="GO:0030335">
    <property type="term" value="P:positive regulation of cell migration"/>
    <property type="evidence" value="ECO:0000314"/>
    <property type="project" value="ARUK-UCL"/>
</dbReference>
<dbReference type="GO" id="GO:0051549">
    <property type="term" value="P:positive regulation of keratinocyte migration"/>
    <property type="evidence" value="ECO:0000315"/>
    <property type="project" value="BHF-UCL"/>
</dbReference>
<dbReference type="GO" id="GO:0034241">
    <property type="term" value="P:positive regulation of macrophage fusion"/>
    <property type="evidence" value="ECO:0000315"/>
    <property type="project" value="BHF-UCL"/>
</dbReference>
<dbReference type="GO" id="GO:0043410">
    <property type="term" value="P:positive regulation of MAPK cascade"/>
    <property type="evidence" value="ECO:0000314"/>
    <property type="project" value="BHF-UCL"/>
</dbReference>
<dbReference type="GO" id="GO:0051044">
    <property type="term" value="P:positive regulation of membrane protein ectodomain proteolysis"/>
    <property type="evidence" value="ECO:0000250"/>
    <property type="project" value="BHF-UCL"/>
</dbReference>
<dbReference type="GO" id="GO:0050714">
    <property type="term" value="P:positive regulation of protein secretion"/>
    <property type="evidence" value="ECO:0000314"/>
    <property type="project" value="BHF-UCL"/>
</dbReference>
<dbReference type="GO" id="GO:0016485">
    <property type="term" value="P:protein processing"/>
    <property type="evidence" value="ECO:0000314"/>
    <property type="project" value="ARUK-UCL"/>
</dbReference>
<dbReference type="GO" id="GO:0051592">
    <property type="term" value="P:response to calcium ion"/>
    <property type="evidence" value="ECO:0000315"/>
    <property type="project" value="BHF-UCL"/>
</dbReference>
<dbReference type="GO" id="GO:0051384">
    <property type="term" value="P:response to glucocorticoid"/>
    <property type="evidence" value="ECO:0000250"/>
    <property type="project" value="BHF-UCL"/>
</dbReference>
<dbReference type="GO" id="GO:0042542">
    <property type="term" value="P:response to hydrogen peroxide"/>
    <property type="evidence" value="ECO:0000315"/>
    <property type="project" value="BHF-UCL"/>
</dbReference>
<dbReference type="GO" id="GO:0010042">
    <property type="term" value="P:response to manganese ion"/>
    <property type="evidence" value="ECO:0000315"/>
    <property type="project" value="BHF-UCL"/>
</dbReference>
<dbReference type="GO" id="GO:0034612">
    <property type="term" value="P:response to tumor necrosis factor"/>
    <property type="evidence" value="ECO:0000314"/>
    <property type="project" value="BHF-UCL"/>
</dbReference>
<dbReference type="GO" id="GO:0007179">
    <property type="term" value="P:transforming growth factor beta receptor signaling pathway"/>
    <property type="evidence" value="ECO:0000315"/>
    <property type="project" value="BHF-UCL"/>
</dbReference>
<dbReference type="CDD" id="cd04269">
    <property type="entry name" value="ZnMc_adamalysin_II_like"/>
    <property type="match status" value="1"/>
</dbReference>
<dbReference type="FunFam" id="3.40.390.10:FF:000002">
    <property type="entry name" value="Disintegrin and metalloproteinase domain-containing protein 22"/>
    <property type="match status" value="1"/>
</dbReference>
<dbReference type="FunFam" id="4.10.70.10:FF:000001">
    <property type="entry name" value="Disintegrin and metalloproteinase domain-containing protein 22"/>
    <property type="match status" value="1"/>
</dbReference>
<dbReference type="Gene3D" id="3.40.390.10">
    <property type="entry name" value="Collagenase (Catalytic Domain)"/>
    <property type="match status" value="1"/>
</dbReference>
<dbReference type="Gene3D" id="4.10.70.10">
    <property type="entry name" value="Disintegrin domain"/>
    <property type="match status" value="1"/>
</dbReference>
<dbReference type="InterPro" id="IPR006586">
    <property type="entry name" value="ADAM_Cys-rich"/>
</dbReference>
<dbReference type="InterPro" id="IPR018358">
    <property type="entry name" value="Disintegrin_CS"/>
</dbReference>
<dbReference type="InterPro" id="IPR001762">
    <property type="entry name" value="Disintegrin_dom"/>
</dbReference>
<dbReference type="InterPro" id="IPR036436">
    <property type="entry name" value="Disintegrin_dom_sf"/>
</dbReference>
<dbReference type="InterPro" id="IPR000742">
    <property type="entry name" value="EGF-like_dom"/>
</dbReference>
<dbReference type="InterPro" id="IPR024079">
    <property type="entry name" value="MetalloPept_cat_dom_sf"/>
</dbReference>
<dbReference type="InterPro" id="IPR001590">
    <property type="entry name" value="Peptidase_M12B"/>
</dbReference>
<dbReference type="InterPro" id="IPR002870">
    <property type="entry name" value="Peptidase_M12B_N"/>
</dbReference>
<dbReference type="InterPro" id="IPR034027">
    <property type="entry name" value="Reprolysin_adamalysin"/>
</dbReference>
<dbReference type="PANTHER" id="PTHR11905">
    <property type="entry name" value="ADAM A DISINTEGRIN AND METALLOPROTEASE DOMAIN"/>
    <property type="match status" value="1"/>
</dbReference>
<dbReference type="PANTHER" id="PTHR11905:SF136">
    <property type="entry name" value="DISINTEGRIN AND METALLOPROTEINASE DOMAIN-CONTAINING PROTEIN 9"/>
    <property type="match status" value="1"/>
</dbReference>
<dbReference type="Pfam" id="PF08516">
    <property type="entry name" value="ADAM_CR"/>
    <property type="match status" value="1"/>
</dbReference>
<dbReference type="Pfam" id="PF00200">
    <property type="entry name" value="Disintegrin"/>
    <property type="match status" value="1"/>
</dbReference>
<dbReference type="Pfam" id="PF01562">
    <property type="entry name" value="Pep_M12B_propep"/>
    <property type="match status" value="1"/>
</dbReference>
<dbReference type="Pfam" id="PF01421">
    <property type="entry name" value="Reprolysin"/>
    <property type="match status" value="1"/>
</dbReference>
<dbReference type="SMART" id="SM00608">
    <property type="entry name" value="ACR"/>
    <property type="match status" value="1"/>
</dbReference>
<dbReference type="SMART" id="SM00050">
    <property type="entry name" value="DISIN"/>
    <property type="match status" value="1"/>
</dbReference>
<dbReference type="SUPFAM" id="SSF57552">
    <property type="entry name" value="Blood coagulation inhibitor (disintegrin)"/>
    <property type="match status" value="1"/>
</dbReference>
<dbReference type="SUPFAM" id="SSF55486">
    <property type="entry name" value="Metalloproteases ('zincins'), catalytic domain"/>
    <property type="match status" value="1"/>
</dbReference>
<dbReference type="PROSITE" id="PS50215">
    <property type="entry name" value="ADAM_MEPRO"/>
    <property type="match status" value="1"/>
</dbReference>
<dbReference type="PROSITE" id="PS00427">
    <property type="entry name" value="DISINTEGRIN_1"/>
    <property type="match status" value="1"/>
</dbReference>
<dbReference type="PROSITE" id="PS50214">
    <property type="entry name" value="DISINTEGRIN_2"/>
    <property type="match status" value="1"/>
</dbReference>
<dbReference type="PROSITE" id="PS01186">
    <property type="entry name" value="EGF_2"/>
    <property type="match status" value="1"/>
</dbReference>
<dbReference type="PROSITE" id="PS50026">
    <property type="entry name" value="EGF_3"/>
    <property type="match status" value="1"/>
</dbReference>
<dbReference type="PROSITE" id="PS00142">
    <property type="entry name" value="ZINC_PROTEASE"/>
    <property type="match status" value="1"/>
</dbReference>
<protein>
    <recommendedName>
        <fullName>Disintegrin and metalloproteinase domain-containing protein 9</fullName>
        <shortName>ADAM 9</shortName>
        <ecNumber evidence="2">3.4.24.-</ecNumber>
    </recommendedName>
    <alternativeName>
        <fullName>Cellular disintegrin-related protein</fullName>
    </alternativeName>
    <alternativeName>
        <fullName>Meltrin-gamma</fullName>
    </alternativeName>
    <alternativeName>
        <fullName>Metalloprotease/disintegrin/cysteine-rich protein 9</fullName>
    </alternativeName>
    <alternativeName>
        <fullName>Myeloma cell metalloproteinase</fullName>
    </alternativeName>
</protein>
<sequence>MGSGARFPSGTLRVRWLLLLGLVGPVLGAARPGFQQTSHLSSYEIITPWRLTRERREAPRPYSKQVSYVIQAEGKEHIIHLERNKDLLPEDFVVYTYNKEGTLITDHPNIQNHCHYRGYVEGVHNSSIALSDCFGLRGLLHLENASYGIEPLQNSSHFEHIIYRMDDVYKEPLKCGVSNKDIEKETAKDEEEEPPSMTQLLRRRRAVLPQTRYVELFIVVDKERYDMMGRNQTAVREEMILLANYLDSMYIMLNIRIVLVGLEIWTNGNLINIVGGAGDVLGNFVQWREKFLITRRRHDSAQLVLKKGFGGTAGMAFVGTVCSRSHAGGINVFGQITVETFASIVAHELGHNLGMNHDDGRDCSCGAKSCIMNSGASGSRNFSSCSAEDFEKLTLNKGGNCLLNIPKPDEAYSAPSCGNKLVDAGEECDCGTPKECELDPCCEGSTCKLKSFAECAYGDCCKDCRFLPGGTLCRGKTSECDVPEYCNGSSQFCQPDVFIQNGYPCQNNKAYCYNGMCQYYDAQCQVIFGSKAKAAPKDCFIEVNSKGDRFGNCGFSGNEYKKCATGNALCGKLQCENVQEIPVFGIVPAIIQTPSRGTKCWGVDFQLGSDVPDPGMVNEGTKCGAGKICRNFQCVDASVLNYDCDVQKKCHGHGVCNSNKNCHCENGWAPPNCETKGYGGSVDSGPTYNEMNTALRDGLLVFFFLIVPLIVCAIFIFIKRDQLWRSYFRKKRSQTYESDGKNQANPSRQPGSVPRHVSPVTPPREVPIYANRFAVPTYAAKQPQQFPSRPPPPQPKVSSQGNLIPARPAPAPPLYSSLT</sequence>
<accession>Q13443</accession>
<accession>B7ZLN7</accession>
<accession>Q10718</accession>
<accession>Q8NFM6</accession>
<reference key="1">
    <citation type="journal article" date="1996" name="J. Cell Biol.">
        <title>MDC9, a widely expressed cellular disintegrin containing cytoplasmic SH3 ligand domains.</title>
        <authorList>
            <person name="Weskamp G."/>
            <person name="Kraetzschmar J."/>
            <person name="Reid M.S."/>
            <person name="Blobel C.P."/>
        </authorList>
    </citation>
    <scope>NUCLEOTIDE SEQUENCE [MRNA] (ISOFORM 1)</scope>
    <scope>TISSUE SPECIFICITY</scope>
    <scope>SUBCELLULAR LOCATION</scope>
    <source>
        <tissue>Mammary carcinoma</tissue>
    </source>
</reference>
<reference key="2">
    <citation type="journal article" date="1996" name="Biochem. J.">
        <title>Cloning of a novel membrane-linked metalloproteinase from human myeloma cells.</title>
        <authorList>
            <person name="McKie N."/>
            <person name="Dallas D.J."/>
            <person name="Edwards T."/>
            <person name="Apperley J.F."/>
            <person name="Russell R.G.G."/>
            <person name="Croucher P.I."/>
        </authorList>
    </citation>
    <scope>NUCLEOTIDE SEQUENCE [MRNA] (ISOFORM 1)</scope>
    <source>
        <tissue>Placenta</tissue>
    </source>
</reference>
<reference key="3">
    <citation type="journal article" date="2002" name="Biochem. Biophys. Res. Commun.">
        <title>A secreted form of human ADAM9 has an alpha-secretase activity for APP.</title>
        <authorList>
            <person name="Hotoda N."/>
            <person name="Koike H."/>
            <person name="Sasagawa N."/>
            <person name="Ishiura S."/>
        </authorList>
    </citation>
    <scope>NUCLEOTIDE SEQUENCE [MRNA] (ISOFORM 2)</scope>
    <scope>FUNCTION</scope>
    <scope>SUBCELLULAR LOCATION</scope>
    <scope>TISSUE SPECIFICITY</scope>
</reference>
<reference key="4">
    <citation type="journal article" date="1994" name="DNA Res.">
        <title>Prediction of the coding sequences of unidentified human genes. I. The coding sequences of 40 new genes (KIAA0001-KIAA0040) deduced by analysis of randomly sampled cDNA clones from human immature myeloid cell line KG-1.</title>
        <authorList>
            <person name="Nomura N."/>
            <person name="Miyajima N."/>
            <person name="Sazuka T."/>
            <person name="Tanaka A."/>
            <person name="Kawarabayasi Y."/>
            <person name="Sato S."/>
            <person name="Nagase T."/>
            <person name="Seki N."/>
            <person name="Ishikawa K."/>
            <person name="Tabata S."/>
        </authorList>
    </citation>
    <scope>NUCLEOTIDE SEQUENCE [LARGE SCALE MRNA] (ISOFORM 1)</scope>
    <scope>TISSUE SPECIFICITY</scope>
    <source>
        <tissue>Bone marrow</tissue>
    </source>
</reference>
<reference key="5">
    <citation type="submission" date="2003-03" db="EMBL/GenBank/DDBJ databases">
        <authorList>
            <person name="Ohara O."/>
            <person name="Nagase T."/>
            <person name="Kikuno R."/>
            <person name="Nomura N."/>
        </authorList>
    </citation>
    <scope>SEQUENCE REVISION</scope>
</reference>
<reference key="6">
    <citation type="submission" date="2005-09" db="EMBL/GenBank/DDBJ databases">
        <authorList>
            <person name="Mural R.J."/>
            <person name="Istrail S."/>
            <person name="Sutton G.G."/>
            <person name="Florea L."/>
            <person name="Halpern A.L."/>
            <person name="Mobarry C.M."/>
            <person name="Lippert R."/>
            <person name="Walenz B."/>
            <person name="Shatkay H."/>
            <person name="Dew I."/>
            <person name="Miller J.R."/>
            <person name="Flanigan M.J."/>
            <person name="Edwards N.J."/>
            <person name="Bolanos R."/>
            <person name="Fasulo D."/>
            <person name="Halldorsson B.V."/>
            <person name="Hannenhalli S."/>
            <person name="Turner R."/>
            <person name="Yooseph S."/>
            <person name="Lu F."/>
            <person name="Nusskern D.R."/>
            <person name="Shue B.C."/>
            <person name="Zheng X.H."/>
            <person name="Zhong F."/>
            <person name="Delcher A.L."/>
            <person name="Huson D.H."/>
            <person name="Kravitz S.A."/>
            <person name="Mouchard L."/>
            <person name="Reinert K."/>
            <person name="Remington K.A."/>
            <person name="Clark A.G."/>
            <person name="Waterman M.S."/>
            <person name="Eichler E.E."/>
            <person name="Adams M.D."/>
            <person name="Hunkapiller M.W."/>
            <person name="Myers E.W."/>
            <person name="Venter J.C."/>
        </authorList>
    </citation>
    <scope>NUCLEOTIDE SEQUENCE [LARGE SCALE GENOMIC DNA]</scope>
</reference>
<reference key="7">
    <citation type="journal article" date="2004" name="Genome Res.">
        <title>The status, quality, and expansion of the NIH full-length cDNA project: the Mammalian Gene Collection (MGC).</title>
        <authorList>
            <consortium name="The MGC Project Team"/>
        </authorList>
    </citation>
    <scope>NUCLEOTIDE SEQUENCE [LARGE SCALE MRNA] (ISOFORM 2)</scope>
    <source>
        <tissue>Lung</tissue>
    </source>
</reference>
<reference key="8">
    <citation type="journal article" date="1997" name="Biochem. Biophys. Res. Commun.">
        <title>Expression of members of a novel membrane linked metalloproteinase family (ADAM) in human articular chondrocytes.</title>
        <authorList>
            <person name="McKie N."/>
            <person name="Edwards T."/>
            <person name="Dallas D.J."/>
            <person name="Houghton A."/>
            <person name="Stringer B."/>
            <person name="Graham R."/>
            <person name="Russell G."/>
            <person name="Croucher P.I."/>
        </authorList>
    </citation>
    <scope>TISSUE SPECIFICITY</scope>
</reference>
<reference key="9">
    <citation type="journal article" date="1999" name="J. Biol. Chem.">
        <title>Interaction of the metalloprotease disintegrins MDC9 and MDC15 with two SH3 domain-containing proteins, endophilin I and SH3PX1.</title>
        <authorList>
            <person name="Howard L."/>
            <person name="Nelson K.K."/>
            <person name="Maciewicz R.A."/>
            <person name="Blobel C.P."/>
        </authorList>
    </citation>
    <scope>INTERACTION WITH SH3GL2 AND SNX9</scope>
</reference>
<reference key="10">
    <citation type="journal article" date="2008" name="Proc. Natl. Acad. Sci. U.S.A.">
        <title>A quantitative atlas of mitotic phosphorylation.</title>
        <authorList>
            <person name="Dephoure N."/>
            <person name="Zhou C."/>
            <person name="Villen J."/>
            <person name="Beausoleil S.A."/>
            <person name="Bakalarski C.E."/>
            <person name="Elledge S.J."/>
            <person name="Gygi S.P."/>
        </authorList>
    </citation>
    <scope>IDENTIFICATION BY MASS SPECTROMETRY [LARGE SCALE ANALYSIS]</scope>
    <source>
        <tissue>Cervix carcinoma</tissue>
    </source>
</reference>
<reference key="11">
    <citation type="journal article" date="2009" name="Am. J. Hum. Genet.">
        <title>Loss of the metalloprotease ADAM9 leads to cone-rod dystrophy in humans and retinal degeneration in mice.</title>
        <authorList>
            <person name="Parry D.A."/>
            <person name="Toomes C."/>
            <person name="Bida L."/>
            <person name="Danciger M."/>
            <person name="Towns K.V."/>
            <person name="McKibbin M."/>
            <person name="Jacobson S.G."/>
            <person name="Logan C.V."/>
            <person name="Ali M."/>
            <person name="Bond J."/>
            <person name="Chance R."/>
            <person name="Swendeman S."/>
            <person name="Daniele L.L."/>
            <person name="Springell K."/>
            <person name="Adams M."/>
            <person name="Johnson C.A."/>
            <person name="Booth A.P."/>
            <person name="Jafri H."/>
            <person name="Rashid Y."/>
            <person name="Banin E."/>
            <person name="Strom T.M."/>
            <person name="Farber D.B."/>
            <person name="Sharon D."/>
            <person name="Blobel C.P."/>
            <person name="Pugh E.N. Jr."/>
            <person name="Pierce E.A."/>
            <person name="Inglehearn C.F."/>
        </authorList>
    </citation>
    <scope>INVOLVEMENT IN CORD9</scope>
</reference>
<reference key="12">
    <citation type="journal article" date="2013" name="J. Proteome Res.">
        <title>Toward a comprehensive characterization of a human cancer cell phosphoproteome.</title>
        <authorList>
            <person name="Zhou H."/>
            <person name="Di Palma S."/>
            <person name="Preisinger C."/>
            <person name="Peng M."/>
            <person name="Polat A.N."/>
            <person name="Heck A.J."/>
            <person name="Mohammed S."/>
        </authorList>
    </citation>
    <scope>PHOSPHORYLATION [LARGE SCALE ANALYSIS] AT SER-758 AND THR-761</scope>
    <scope>IDENTIFICATION BY MASS SPECTROMETRY [LARGE SCALE ANALYSIS]</scope>
    <source>
        <tissue>Cervix carcinoma</tissue>
        <tissue>Erythroleukemia</tissue>
    </source>
</reference>
<name>ADAM9_HUMAN</name>
<proteinExistence type="evidence at protein level"/>
<comment type="function">
    <text evidence="2">Metalloprotease that cleaves and releases a number of molecules with important roles in tumorigenesis and angiogenesis, such as TEK, KDR, EPHB4, CD40, VCAM1 and CDH5. May mediate cell-cell, cell-matrix interactions and regulate the motility of cells via interactions with integrins.</text>
</comment>
<comment type="function">
    <molecule>Isoform 2</molecule>
    <text evidence="11">May act as alpha-secretase for amyloid precursor protein (APP).</text>
</comment>
<comment type="cofactor">
    <cofactor evidence="3">
        <name>Zn(2+)</name>
        <dbReference type="ChEBI" id="CHEBI:29105"/>
    </cofactor>
    <text evidence="3">Binds 1 zinc ion per subunit.</text>
</comment>
<comment type="activity regulation">
    <text evidence="2">Synthesized as an inactive form which is proteolytically cleaved to generate an active enzyme. Processing at the upstream site is particularly important for activation of the proenzyme, whereas processing at the boundary between the pro-domain and the catalytic domain does not appear to be essential. Inhibited by hydroxamic acid-based inhibitors.</text>
</comment>
<comment type="subunit">
    <text evidence="2 10">Interacts with SH3GL2 and SNX9 through its cytoplasmic tail (PubMed:10531379). Interacts with ITGA6.</text>
</comment>
<comment type="interaction">
    <interactant intactId="EBI-77903">
        <id>Q13443</id>
    </interactant>
    <interactant intactId="EBI-77889">
        <id>Q9UI95</id>
        <label>MAD2L2</label>
    </interactant>
    <organismsDiffer>false</organismsDiffer>
    <experiments>3</experiments>
</comment>
<comment type="interaction">
    <interactant intactId="EBI-77903">
        <id>Q13443</id>
    </interactant>
    <interactant intactId="EBI-77926">
        <id>Q9UKS6</id>
        <label>PACSIN3</label>
    </interactant>
    <organismsDiffer>false</organismsDiffer>
    <experiments>2</experiments>
</comment>
<comment type="interaction">
    <interactant intactId="EBI-77903">
        <id>Q13443</id>
    </interactant>
    <interactant intactId="EBI-77938">
        <id>Q99962</id>
        <label>SH3GL2</label>
    </interactant>
    <organismsDiffer>false</organismsDiffer>
    <experiments>2</experiments>
</comment>
<comment type="interaction">
    <interactant intactId="EBI-77903">
        <id>Q13443</id>
    </interactant>
    <interactant intactId="EBI-298169">
        <id>Q96RF0</id>
        <label>SNX18</label>
    </interactant>
    <organismsDiffer>false</organismsDiffer>
    <experiments>2</experiments>
</comment>
<comment type="subcellular location">
    <molecule>Isoform 1</molecule>
    <subcellularLocation>
        <location evidence="14">Cell membrane</location>
        <topology evidence="4">Single-pass type I membrane protein</topology>
    </subcellularLocation>
</comment>
<comment type="subcellular location">
    <molecule>Isoform 2</molecule>
    <subcellularLocation>
        <location evidence="11">Secreted</location>
    </subcellularLocation>
</comment>
<comment type="alternative products">
    <event type="alternative splicing"/>
    <isoform>
        <id>Q13443-1</id>
        <name>1</name>
        <sequence type="displayed"/>
    </isoform>
    <isoform>
        <id>Q13443-2</id>
        <name>2</name>
        <sequence type="described" ref="VSP_011057 VSP_011058"/>
    </isoform>
</comment>
<comment type="tissue specificity">
    <text evidence="11 13 14 15">Widely expressed. Expressed in chondrocytes. Isoform 2 is highly expressed in liver and heart.</text>
</comment>
<comment type="PTM">
    <text evidence="2">Proteolytically cleaved in the trans-Golgi network before it reaches the plasma membrane to generate a mature protein. The removal of the pro-domain occurs via cleavage at two different sites. Processed most likely by a pro-protein convertase such as furin, at the boundary between the pro-domain and the catalytic domain. An additional upstream cleavage pro-protein convertase site (Arg-56/Glu-57) has an important role in the activation of ADAM9.</text>
</comment>
<comment type="PTM">
    <text evidence="2">Phosphorylation is induced in vitro by phorbol-12-myristate-13-acetate (PMA).</text>
</comment>
<comment type="disease" evidence="12">
    <disease id="DI-02490">
        <name>Cone-rod dystrophy 9</name>
        <acronym>CORD9</acronym>
        <description>An inherited retinal dystrophy characterized by retinal pigment deposits visible on fundus examination, predominantly in the macular region, and initial loss of cone photoreceptors followed by rod degeneration. This leads to decreased visual acuity and sensitivity in the central visual field, followed by loss of peripheral vision. Severe loss of vision occurs earlier than in retinitis pigmentosa, due to cone photoreceptors degenerating at a higher rate than rod photoreceptors.</description>
        <dbReference type="MIM" id="612775"/>
    </disease>
    <text>The disease is caused by variants affecting the gene represented in this entry.</text>
</comment>
<comment type="miscellaneous">
    <molecule>Isoform 2</molecule>
    <text evidence="18">May be produced at very low levels due to a premature stop codon in the mRNA, leading to nonsense-mediated mRNA decay.</text>
</comment>
<comment type="caution">
    <text evidence="18">Has sometimes been referred to as ADAM-12.</text>
</comment>
<comment type="online information" name="Atlas of Genetics and Cytogenetics in Oncology and Haematology">
    <link uri="https://atlasgeneticsoncology.org/gene/573/ADAM9"/>
</comment>
<organism>
    <name type="scientific">Homo sapiens</name>
    <name type="common">Human</name>
    <dbReference type="NCBI Taxonomy" id="9606"/>
    <lineage>
        <taxon>Eukaryota</taxon>
        <taxon>Metazoa</taxon>
        <taxon>Chordata</taxon>
        <taxon>Craniata</taxon>
        <taxon>Vertebrata</taxon>
        <taxon>Euteleostomi</taxon>
        <taxon>Mammalia</taxon>
        <taxon>Eutheria</taxon>
        <taxon>Euarchontoglires</taxon>
        <taxon>Primates</taxon>
        <taxon>Haplorrhini</taxon>
        <taxon>Catarrhini</taxon>
        <taxon>Hominidae</taxon>
        <taxon>Homo</taxon>
    </lineage>
</organism>
<keyword id="KW-0025">Alternative splicing</keyword>
<keyword id="KW-1003">Cell membrane</keyword>
<keyword id="KW-0182">Cone-rod dystrophy</keyword>
<keyword id="KW-1015">Disulfide bond</keyword>
<keyword id="KW-0325">Glycoprotein</keyword>
<keyword id="KW-0378">Hydrolase</keyword>
<keyword id="KW-0472">Membrane</keyword>
<keyword id="KW-0479">Metal-binding</keyword>
<keyword id="KW-0482">Metalloprotease</keyword>
<keyword id="KW-0597">Phosphoprotein</keyword>
<keyword id="KW-0645">Protease</keyword>
<keyword id="KW-1267">Proteomics identification</keyword>
<keyword id="KW-1185">Reference proteome</keyword>
<keyword id="KW-0964">Secreted</keyword>
<keyword id="KW-0732">Signal</keyword>
<keyword id="KW-0812">Transmembrane</keyword>
<keyword id="KW-1133">Transmembrane helix</keyword>
<keyword id="KW-0862">Zinc</keyword>
<evidence type="ECO:0000250" key="1"/>
<evidence type="ECO:0000250" key="2">
    <source>
        <dbReference type="UniProtKB" id="Q61072"/>
    </source>
</evidence>
<evidence type="ECO:0000250" key="3">
    <source>
        <dbReference type="UniProtKB" id="Q9BZ11"/>
    </source>
</evidence>
<evidence type="ECO:0000255" key="4"/>
<evidence type="ECO:0000255" key="5">
    <source>
        <dbReference type="PROSITE-ProRule" id="PRU00068"/>
    </source>
</evidence>
<evidence type="ECO:0000255" key="6">
    <source>
        <dbReference type="PROSITE-ProRule" id="PRU00076"/>
    </source>
</evidence>
<evidence type="ECO:0000255" key="7">
    <source>
        <dbReference type="PROSITE-ProRule" id="PRU00276"/>
    </source>
</evidence>
<evidence type="ECO:0000255" key="8">
    <source>
        <dbReference type="PROSITE-ProRule" id="PRU10095"/>
    </source>
</evidence>
<evidence type="ECO:0000256" key="9">
    <source>
        <dbReference type="SAM" id="MobiDB-lite"/>
    </source>
</evidence>
<evidence type="ECO:0000269" key="10">
    <source>
    </source>
</evidence>
<evidence type="ECO:0000269" key="11">
    <source>
    </source>
</evidence>
<evidence type="ECO:0000269" key="12">
    <source>
    </source>
</evidence>
<evidence type="ECO:0000269" key="13">
    <source>
    </source>
</evidence>
<evidence type="ECO:0000269" key="14">
    <source>
    </source>
</evidence>
<evidence type="ECO:0000269" key="15">
    <source>
    </source>
</evidence>
<evidence type="ECO:0000303" key="16">
    <source>
    </source>
</evidence>
<evidence type="ECO:0000303" key="17">
    <source>
    </source>
</evidence>
<evidence type="ECO:0000305" key="18"/>
<evidence type="ECO:0007744" key="19">
    <source>
    </source>
</evidence>
<feature type="signal peptide" evidence="4">
    <location>
        <begin position="1"/>
        <end position="28"/>
    </location>
</feature>
<feature type="chain" id="PRO_0000029062" description="Disintegrin and metalloproteinase domain-containing protein 9">
    <location>
        <begin position="29"/>
        <end position="819"/>
    </location>
</feature>
<feature type="topological domain" description="Extracellular" evidence="4">
    <location>
        <begin position="29"/>
        <end position="697"/>
    </location>
</feature>
<feature type="transmembrane region" description="Helical" evidence="4">
    <location>
        <begin position="698"/>
        <end position="718"/>
    </location>
</feature>
<feature type="topological domain" description="Cytoplasmic" evidence="4">
    <location>
        <begin position="719"/>
        <end position="819"/>
    </location>
</feature>
<feature type="domain" description="Peptidase M12B" evidence="7">
    <location>
        <begin position="212"/>
        <end position="406"/>
    </location>
</feature>
<feature type="domain" description="Disintegrin" evidence="5">
    <location>
        <begin position="414"/>
        <end position="501"/>
    </location>
</feature>
<feature type="domain" description="EGF-like" evidence="6">
    <location>
        <begin position="644"/>
        <end position="698"/>
    </location>
</feature>
<feature type="region of interest" description="Disordered" evidence="9">
    <location>
        <begin position="734"/>
        <end position="763"/>
    </location>
</feature>
<feature type="region of interest" description="Disordered" evidence="9">
    <location>
        <begin position="780"/>
        <end position="819"/>
    </location>
</feature>
<feature type="compositionally biased region" description="Polar residues" evidence="9">
    <location>
        <begin position="735"/>
        <end position="750"/>
    </location>
</feature>
<feature type="active site" evidence="7 8">
    <location>
        <position position="348"/>
    </location>
</feature>
<feature type="binding site" evidence="1">
    <location>
        <position position="347"/>
    </location>
    <ligand>
        <name>Zn(2+)</name>
        <dbReference type="ChEBI" id="CHEBI:29105"/>
        <note>catalytic</note>
    </ligand>
</feature>
<feature type="binding site" evidence="1">
    <location>
        <position position="351"/>
    </location>
    <ligand>
        <name>Zn(2+)</name>
        <dbReference type="ChEBI" id="CHEBI:29105"/>
        <note>catalytic</note>
    </ligand>
</feature>
<feature type="binding site" evidence="1">
    <location>
        <position position="357"/>
    </location>
    <ligand>
        <name>Zn(2+)</name>
        <dbReference type="ChEBI" id="CHEBI:29105"/>
        <note>catalytic</note>
    </ligand>
</feature>
<feature type="site" description="Cleavage" evidence="2">
    <location>
        <begin position="56"/>
        <end position="57"/>
    </location>
</feature>
<feature type="site" description="Cleavage; by furin-like protease" evidence="2">
    <location>
        <begin position="205"/>
        <end position="206"/>
    </location>
</feature>
<feature type="modified residue" description="Phosphoserine" evidence="19">
    <location>
        <position position="758"/>
    </location>
</feature>
<feature type="modified residue" description="Phosphothreonine" evidence="19">
    <location>
        <position position="761"/>
    </location>
</feature>
<feature type="glycosylation site" description="N-linked (GlcNAc...) asparagine" evidence="4">
    <location>
        <position position="125"/>
    </location>
</feature>
<feature type="glycosylation site" description="N-linked (GlcNAc...) asparagine" evidence="4">
    <location>
        <position position="144"/>
    </location>
</feature>
<feature type="glycosylation site" description="N-linked (GlcNAc...) asparagine" evidence="4">
    <location>
        <position position="154"/>
    </location>
</feature>
<feature type="glycosylation site" description="N-linked (GlcNAc...) asparagine" evidence="4">
    <location>
        <position position="231"/>
    </location>
</feature>
<feature type="glycosylation site" description="N-linked (GlcNAc...) asparagine" evidence="4">
    <location>
        <position position="381"/>
    </location>
</feature>
<feature type="glycosylation site" description="N-linked (GlcNAc...) asparagine" evidence="4">
    <location>
        <position position="487"/>
    </location>
</feature>
<feature type="disulfide bond" evidence="1">
    <location>
        <begin position="322"/>
        <end position="401"/>
    </location>
</feature>
<feature type="disulfide bond" evidence="1">
    <location>
        <begin position="363"/>
        <end position="385"/>
    </location>
</feature>
<feature type="disulfide bond" evidence="1">
    <location>
        <begin position="365"/>
        <end position="370"/>
    </location>
</feature>
<feature type="disulfide bond" evidence="1">
    <location>
        <begin position="473"/>
        <end position="493"/>
    </location>
</feature>
<feature type="disulfide bond" evidence="1">
    <location>
        <begin position="644"/>
        <end position="656"/>
    </location>
</feature>
<feature type="disulfide bond" evidence="1">
    <location>
        <begin position="650"/>
        <end position="662"/>
    </location>
</feature>
<feature type="disulfide bond" evidence="1">
    <location>
        <begin position="664"/>
        <end position="673"/>
    </location>
</feature>
<feature type="splice variant" id="VSP_011057" description="In isoform 2." evidence="16 17">
    <original>V</original>
    <variation>K</variation>
    <location>
        <position position="655"/>
    </location>
</feature>
<feature type="splice variant" id="VSP_011058" description="In isoform 2." evidence="16 17">
    <location>
        <begin position="656"/>
        <end position="819"/>
    </location>
</feature>
<feature type="sequence conflict" description="In Ref. 2; no nucleotide entry." evidence="18" ref="2">
    <location>
        <begin position="1"/>
        <end position="118"/>
    </location>
</feature>
<feature type="sequence conflict" description="In Ref. 4; BAA03499." evidence="18" ref="4">
    <original>R</original>
    <variation>Q</variation>
    <location>
        <position position="117"/>
    </location>
</feature>
<feature type="sequence conflict" description="In Ref. 2; no nucleotide entry." evidence="18" ref="2">
    <original>YVEGVHNSSIALSDCFG</original>
    <variation>MWREFIIHPLLLATVLD</variation>
    <location>
        <begin position="119"/>
        <end position="135"/>
    </location>
</feature>
<feature type="sequence conflict" description="In Ref. 2; no nucleotide entry." evidence="18" ref="2">
    <original>N</original>
    <variation>M</variation>
    <location>
        <position position="154"/>
    </location>
</feature>
<feature type="sequence conflict" description="In Ref. 2; no nucleotide entry." evidence="18" ref="2">
    <original>G</original>
    <variation>GLSLKFHAPFLSTMLQEAVRQTGTYLGGSVCCMKSDCRIVTLVK</variation>
    <location>
        <position position="566"/>
    </location>
</feature>
<feature type="sequence conflict" description="In Ref. 2; no nucleotide entry." evidence="18" ref="2">
    <original>AIFIFIKRDQLWRSYFRKKRSQT</original>
    <variation>DYFYLHQEGSTVEKLLQKEEITN</variation>
    <location>
        <begin position="713"/>
        <end position="735"/>
    </location>
</feature>
<feature type="sequence conflict" description="In Ref. 2; no nucleotide entry." evidence="18" ref="2">
    <location>
        <begin position="736"/>
        <end position="819"/>
    </location>
</feature>